<keyword id="KW-0968">Cytoplasmic vesicle</keyword>
<keyword id="KW-0256">Endoplasmic reticulum</keyword>
<keyword id="KW-0931">ER-Golgi transport</keyword>
<keyword id="KW-0333">Golgi apparatus</keyword>
<keyword id="KW-0342">GTP-binding</keyword>
<keyword id="KW-0378">Hydrolase</keyword>
<keyword id="KW-0472">Membrane</keyword>
<keyword id="KW-0547">Nucleotide-binding</keyword>
<keyword id="KW-0653">Protein transport</keyword>
<keyword id="KW-1185">Reference proteome</keyword>
<keyword id="KW-0813">Transport</keyword>
<gene>
    <name type="primary">sar1</name>
    <name type="ORF">ATEG_02597</name>
</gene>
<dbReference type="EC" id="3.6.5.-"/>
<dbReference type="EMBL" id="CH476596">
    <property type="protein sequence ID" value="EAU37559.1"/>
    <property type="molecule type" value="Genomic_DNA"/>
</dbReference>
<dbReference type="RefSeq" id="XP_001211775.1">
    <property type="nucleotide sequence ID" value="XM_001211775.1"/>
</dbReference>
<dbReference type="SMR" id="Q0CUN7"/>
<dbReference type="STRING" id="341663.Q0CUN7"/>
<dbReference type="EnsemblFungi" id="EAU37559">
    <property type="protein sequence ID" value="EAU37559"/>
    <property type="gene ID" value="ATEG_02597"/>
</dbReference>
<dbReference type="GeneID" id="4317085"/>
<dbReference type="VEuPathDB" id="FungiDB:ATEG_02597"/>
<dbReference type="eggNOG" id="KOG0077">
    <property type="taxonomic scope" value="Eukaryota"/>
</dbReference>
<dbReference type="HOGENOM" id="CLU_040729_6_0_1"/>
<dbReference type="OMA" id="GLWNKHG"/>
<dbReference type="OrthoDB" id="2011769at2759"/>
<dbReference type="Proteomes" id="UP000007963">
    <property type="component" value="Unassembled WGS sequence"/>
</dbReference>
<dbReference type="GO" id="GO:0030127">
    <property type="term" value="C:COPII vesicle coat"/>
    <property type="evidence" value="ECO:0007669"/>
    <property type="project" value="EnsemblFungi"/>
</dbReference>
<dbReference type="GO" id="GO:0070971">
    <property type="term" value="C:endoplasmic reticulum exit site"/>
    <property type="evidence" value="ECO:0007669"/>
    <property type="project" value="EnsemblFungi"/>
</dbReference>
<dbReference type="GO" id="GO:0005789">
    <property type="term" value="C:endoplasmic reticulum membrane"/>
    <property type="evidence" value="ECO:0007669"/>
    <property type="project" value="UniProtKB-SubCell"/>
</dbReference>
<dbReference type="GO" id="GO:0000139">
    <property type="term" value="C:Golgi membrane"/>
    <property type="evidence" value="ECO:0007669"/>
    <property type="project" value="UniProtKB-SubCell"/>
</dbReference>
<dbReference type="GO" id="GO:0044233">
    <property type="term" value="C:mitochondria-associated endoplasmic reticulum membrane contact site"/>
    <property type="evidence" value="ECO:0007669"/>
    <property type="project" value="EnsemblFungi"/>
</dbReference>
<dbReference type="GO" id="GO:0005739">
    <property type="term" value="C:mitochondrion"/>
    <property type="evidence" value="ECO:0007669"/>
    <property type="project" value="GOC"/>
</dbReference>
<dbReference type="GO" id="GO:0005525">
    <property type="term" value="F:GTP binding"/>
    <property type="evidence" value="ECO:0007669"/>
    <property type="project" value="UniProtKB-KW"/>
</dbReference>
<dbReference type="GO" id="GO:0003924">
    <property type="term" value="F:GTPase activity"/>
    <property type="evidence" value="ECO:0007669"/>
    <property type="project" value="EnsemblFungi"/>
</dbReference>
<dbReference type="GO" id="GO:0090158">
    <property type="term" value="P:endoplasmic reticulum membrane organization"/>
    <property type="evidence" value="ECO:0007669"/>
    <property type="project" value="EnsemblFungi"/>
</dbReference>
<dbReference type="GO" id="GO:0006888">
    <property type="term" value="P:endoplasmic reticulum to Golgi vesicle-mediated transport"/>
    <property type="evidence" value="ECO:0007669"/>
    <property type="project" value="EnsemblFungi"/>
</dbReference>
<dbReference type="GO" id="GO:0006886">
    <property type="term" value="P:intracellular protein transport"/>
    <property type="evidence" value="ECO:0007669"/>
    <property type="project" value="InterPro"/>
</dbReference>
<dbReference type="GO" id="GO:0000266">
    <property type="term" value="P:mitochondrial fission"/>
    <property type="evidence" value="ECO:0007669"/>
    <property type="project" value="EnsemblFungi"/>
</dbReference>
<dbReference type="GO" id="GO:0007006">
    <property type="term" value="P:mitochondrial membrane organization"/>
    <property type="evidence" value="ECO:0007669"/>
    <property type="project" value="EnsemblFungi"/>
</dbReference>
<dbReference type="GO" id="GO:0006998">
    <property type="term" value="P:nuclear envelope organization"/>
    <property type="evidence" value="ECO:0007669"/>
    <property type="project" value="EnsemblFungi"/>
</dbReference>
<dbReference type="GO" id="GO:1902953">
    <property type="term" value="P:positive regulation of ER to Golgi vesicle-mediated transport"/>
    <property type="evidence" value="ECO:0007669"/>
    <property type="project" value="EnsemblFungi"/>
</dbReference>
<dbReference type="GO" id="GO:0070863">
    <property type="term" value="P:positive regulation of protein exit from endoplasmic reticulum"/>
    <property type="evidence" value="ECO:0007669"/>
    <property type="project" value="EnsemblFungi"/>
</dbReference>
<dbReference type="GO" id="GO:0003400">
    <property type="term" value="P:regulation of COPII vesicle coating"/>
    <property type="evidence" value="ECO:0007669"/>
    <property type="project" value="EnsemblFungi"/>
</dbReference>
<dbReference type="GO" id="GO:0016050">
    <property type="term" value="P:vesicle organization"/>
    <property type="evidence" value="ECO:0007669"/>
    <property type="project" value="EnsemblFungi"/>
</dbReference>
<dbReference type="CDD" id="cd00879">
    <property type="entry name" value="Sar1"/>
    <property type="match status" value="1"/>
</dbReference>
<dbReference type="FunFam" id="3.40.50.300:FF:000161">
    <property type="entry name" value="Small COPII coat GTPase"/>
    <property type="match status" value="1"/>
</dbReference>
<dbReference type="Gene3D" id="3.40.50.300">
    <property type="entry name" value="P-loop containing nucleotide triphosphate hydrolases"/>
    <property type="match status" value="1"/>
</dbReference>
<dbReference type="InterPro" id="IPR027417">
    <property type="entry name" value="P-loop_NTPase"/>
</dbReference>
<dbReference type="InterPro" id="IPR005225">
    <property type="entry name" value="Small_GTP-bd"/>
</dbReference>
<dbReference type="InterPro" id="IPR006689">
    <property type="entry name" value="Small_GTPase_ARF/SAR"/>
</dbReference>
<dbReference type="InterPro" id="IPR006687">
    <property type="entry name" value="Small_GTPase_SAR1"/>
</dbReference>
<dbReference type="NCBIfam" id="TIGR00231">
    <property type="entry name" value="small_GTP"/>
    <property type="match status" value="1"/>
</dbReference>
<dbReference type="PANTHER" id="PTHR45684">
    <property type="entry name" value="RE74312P"/>
    <property type="match status" value="1"/>
</dbReference>
<dbReference type="Pfam" id="PF00025">
    <property type="entry name" value="Arf"/>
    <property type="match status" value="1"/>
</dbReference>
<dbReference type="PRINTS" id="PR00328">
    <property type="entry name" value="SAR1GTPBP"/>
</dbReference>
<dbReference type="SMART" id="SM00177">
    <property type="entry name" value="ARF"/>
    <property type="match status" value="1"/>
</dbReference>
<dbReference type="SMART" id="SM00178">
    <property type="entry name" value="SAR"/>
    <property type="match status" value="1"/>
</dbReference>
<dbReference type="SUPFAM" id="SSF52540">
    <property type="entry name" value="P-loop containing nucleoside triphosphate hydrolases"/>
    <property type="match status" value="1"/>
</dbReference>
<dbReference type="PROSITE" id="PS51422">
    <property type="entry name" value="SAR1"/>
    <property type="match status" value="1"/>
</dbReference>
<comment type="function">
    <text evidence="1">Small GTPase component of the coat protein complex II (COPII) which promotes the formation of transport vesicles from the endoplasmic reticulum (ER). The coat has two main functions, the physical deformation of the endoplasmic reticulum membrane into vesicles and the selection of cargo molecules. Sar1 controls the coat assembly in a stepwise manner. Activated Sar1-GTP binds to membranes first and recruits the sec23/24 complex. These sec23/24-sar1 prebudding intermediates are then collected by the Sec13/31 complex as subunits polymerize to form coated transport vesicles. Conversion to sar1-GDP triggers coat release and recycles COPII subunits (By similarity).</text>
</comment>
<comment type="catalytic activity">
    <reaction>
        <text>GTP + H2O = GDP + phosphate + H(+)</text>
        <dbReference type="Rhea" id="RHEA:19669"/>
        <dbReference type="ChEBI" id="CHEBI:15377"/>
        <dbReference type="ChEBI" id="CHEBI:15378"/>
        <dbReference type="ChEBI" id="CHEBI:37565"/>
        <dbReference type="ChEBI" id="CHEBI:43474"/>
        <dbReference type="ChEBI" id="CHEBI:58189"/>
    </reaction>
</comment>
<comment type="subunit">
    <text evidence="1">COPII is composed of at least 5 proteins: the sec23/24 complex, the sec13/31 complex and sar1.</text>
</comment>
<comment type="subcellular location">
    <subcellularLocation>
        <location evidence="1">Cytoplasmic vesicle</location>
        <location evidence="1">COPII-coated vesicle membrane</location>
        <topology evidence="1">Peripheral membrane protein</topology>
        <orientation evidence="1">Cytoplasmic side</orientation>
    </subcellularLocation>
    <subcellularLocation>
        <location evidence="1">Endoplasmic reticulum membrane</location>
        <topology evidence="1">Peripheral membrane protein</topology>
        <orientation evidence="1">Cytoplasmic side</orientation>
    </subcellularLocation>
    <subcellularLocation>
        <location evidence="1">Golgi apparatus membrane</location>
        <topology evidence="1">Peripheral membrane protein</topology>
        <orientation evidence="1">Cytoplasmic side</orientation>
    </subcellularLocation>
</comment>
<comment type="similarity">
    <text evidence="2">Belongs to the small GTPase superfamily. SAR1 family.</text>
</comment>
<name>SAR1_ASPTN</name>
<proteinExistence type="inferred from homology"/>
<evidence type="ECO:0000250" key="1"/>
<evidence type="ECO:0000305" key="2"/>
<sequence length="189" mass="21470">MWIINWFYDILASLGLLNKHAKLLFLGLDNAGKTTLLHMLKNDRVAILQPTAHPTSEELAIGNNRFTTFDLGGHQQARRLWKDYFPEVSGIVFLVDAKDYERFPESKAELDALLAMEELAKVPFLILGNKIDHPDAVSEDELRHQLGLYQTTGKGKVPLEGIRPIEVFMCSVVMRQGYGEGIRWLSQYV</sequence>
<accession>Q0CUN7</accession>
<feature type="chain" id="PRO_0000295509" description="Small COPII coat GTPase sar1">
    <location>
        <begin position="1"/>
        <end position="189"/>
    </location>
</feature>
<feature type="binding site" evidence="1">
    <location>
        <begin position="27"/>
        <end position="34"/>
    </location>
    <ligand>
        <name>GTP</name>
        <dbReference type="ChEBI" id="CHEBI:37565"/>
    </ligand>
</feature>
<feature type="binding site" evidence="1">
    <location>
        <begin position="70"/>
        <end position="73"/>
    </location>
    <ligand>
        <name>GTP</name>
        <dbReference type="ChEBI" id="CHEBI:37565"/>
    </ligand>
</feature>
<feature type="binding site" evidence="1">
    <location>
        <begin position="129"/>
        <end position="132"/>
    </location>
    <ligand>
        <name>GTP</name>
        <dbReference type="ChEBI" id="CHEBI:37565"/>
    </ligand>
</feature>
<reference key="1">
    <citation type="submission" date="2005-09" db="EMBL/GenBank/DDBJ databases">
        <title>Annotation of the Aspergillus terreus NIH2624 genome.</title>
        <authorList>
            <person name="Birren B.W."/>
            <person name="Lander E.S."/>
            <person name="Galagan J.E."/>
            <person name="Nusbaum C."/>
            <person name="Devon K."/>
            <person name="Henn M."/>
            <person name="Ma L.-J."/>
            <person name="Jaffe D.B."/>
            <person name="Butler J."/>
            <person name="Alvarez P."/>
            <person name="Gnerre S."/>
            <person name="Grabherr M."/>
            <person name="Kleber M."/>
            <person name="Mauceli E.W."/>
            <person name="Brockman W."/>
            <person name="Rounsley S."/>
            <person name="Young S.K."/>
            <person name="LaButti K."/>
            <person name="Pushparaj V."/>
            <person name="DeCaprio D."/>
            <person name="Crawford M."/>
            <person name="Koehrsen M."/>
            <person name="Engels R."/>
            <person name="Montgomery P."/>
            <person name="Pearson M."/>
            <person name="Howarth C."/>
            <person name="Larson L."/>
            <person name="Luoma S."/>
            <person name="White J."/>
            <person name="Alvarado L."/>
            <person name="Kodira C.D."/>
            <person name="Zeng Q."/>
            <person name="Oleary S."/>
            <person name="Yandava C."/>
            <person name="Denning D.W."/>
            <person name="Nierman W.C."/>
            <person name="Milne T."/>
            <person name="Madden K."/>
        </authorList>
    </citation>
    <scope>NUCLEOTIDE SEQUENCE [LARGE SCALE GENOMIC DNA]</scope>
    <source>
        <strain>NIH 2624 / FGSC A1156</strain>
    </source>
</reference>
<protein>
    <recommendedName>
        <fullName>Small COPII coat GTPase sar1</fullName>
        <ecNumber>3.6.5.-</ecNumber>
    </recommendedName>
</protein>
<organism>
    <name type="scientific">Aspergillus terreus (strain NIH 2624 / FGSC A1156)</name>
    <dbReference type="NCBI Taxonomy" id="341663"/>
    <lineage>
        <taxon>Eukaryota</taxon>
        <taxon>Fungi</taxon>
        <taxon>Dikarya</taxon>
        <taxon>Ascomycota</taxon>
        <taxon>Pezizomycotina</taxon>
        <taxon>Eurotiomycetes</taxon>
        <taxon>Eurotiomycetidae</taxon>
        <taxon>Eurotiales</taxon>
        <taxon>Aspergillaceae</taxon>
        <taxon>Aspergillus</taxon>
        <taxon>Aspergillus subgen. Circumdati</taxon>
    </lineage>
</organism>